<gene>
    <name type="primary">PA</name>
</gene>
<evidence type="ECO:0000250" key="1">
    <source>
        <dbReference type="UniProtKB" id="P0CK64"/>
    </source>
</evidence>
<evidence type="ECO:0000250" key="2">
    <source>
        <dbReference type="UniProtKB" id="P0CK68"/>
    </source>
</evidence>
<evidence type="ECO:0000250" key="3">
    <source>
        <dbReference type="UniProtKB" id="P0DJW8"/>
    </source>
</evidence>
<evidence type="ECO:0000250" key="4">
    <source>
        <dbReference type="UniProtKB" id="P0DXO5"/>
    </source>
</evidence>
<evidence type="ECO:0000305" key="5"/>
<organism>
    <name type="scientific">Influenza A virus (strain A/Leningrad/134/17/1957 H2N2)</name>
    <dbReference type="NCBI Taxonomy" id="380984"/>
    <lineage>
        <taxon>Viruses</taxon>
        <taxon>Riboviria</taxon>
        <taxon>Orthornavirae</taxon>
        <taxon>Negarnaviricota</taxon>
        <taxon>Polyploviricotina</taxon>
        <taxon>Insthoviricetes</taxon>
        <taxon>Articulavirales</taxon>
        <taxon>Orthomyxoviridae</taxon>
        <taxon>Alphainfluenzavirus</taxon>
        <taxon>Alphainfluenzavirus influenzae</taxon>
        <taxon>Influenza A virus</taxon>
    </lineage>
</organism>
<comment type="function">
    <text evidence="1 4">Plays a major role in the shutoff of the host protein expression by cleaving mRNAs probably via an endonuclease activity. This host shutoff allows the virus to escape from the host antiviral response (By similarity). Hijacks host RNA splicing machinery to selectively target host RNAs containing introns for destruction. This may explain the preferential degradation of RNAs that have undergone co- or post-transcriptional processing (By similarity).</text>
</comment>
<comment type="subcellular location">
    <subcellularLocation>
        <location evidence="4">Host cytoplasm</location>
    </subcellularLocation>
    <subcellularLocation>
        <location evidence="4">Host nucleus</location>
    </subcellularLocation>
</comment>
<comment type="alternative products">
    <event type="ribosomal frameshifting"/>
    <isoform>
        <id>P0DJS4-1</id>
        <name>PA-X</name>
        <sequence type="displayed"/>
    </isoform>
    <isoform>
        <id>P67921-1</id>
        <name>PA</name>
        <sequence type="external"/>
    </isoform>
</comment>
<comment type="domain">
    <text evidence="1 4">The probable endonuclease active site in the N-terminus and the basic amino acid cluster in the C-terminus are important for the shutoff activity. The C-terminus acts as a nuclear localization signal (By similarity). The C-terminus is recruited to host protein complexes involved in nuclear Pol II RNA processing (By similarity).</text>
</comment>
<comment type="similarity">
    <text evidence="5">Belongs to the influenza viruses PA-X family.</text>
</comment>
<proteinExistence type="evidence at transcript level"/>
<dbReference type="EMBL" id="M81579">
    <property type="status" value="NOT_ANNOTATED_CDS"/>
    <property type="molecule type" value="mRNA"/>
</dbReference>
<dbReference type="SMR" id="P0DJS4"/>
<dbReference type="GO" id="GO:0003723">
    <property type="term" value="F:RNA binding"/>
    <property type="evidence" value="ECO:0007669"/>
    <property type="project" value="InterPro"/>
</dbReference>
<dbReference type="GO" id="GO:0039694">
    <property type="term" value="P:viral RNA genome replication"/>
    <property type="evidence" value="ECO:0007669"/>
    <property type="project" value="InterPro"/>
</dbReference>
<dbReference type="GO" id="GO:0075523">
    <property type="term" value="P:viral translational frameshifting"/>
    <property type="evidence" value="ECO:0007669"/>
    <property type="project" value="UniProtKB-KW"/>
</dbReference>
<dbReference type="FunFam" id="3.40.91.90:FF:000001">
    <property type="entry name" value="Polymerase acidic protein"/>
    <property type="match status" value="1"/>
</dbReference>
<dbReference type="Gene3D" id="3.40.91.90">
    <property type="entry name" value="Influenza RNA-dependent RNA polymerase subunit PA, endonuclease domain"/>
    <property type="match status" value="1"/>
</dbReference>
<dbReference type="InterPro" id="IPR001009">
    <property type="entry name" value="PA/PA-X"/>
</dbReference>
<dbReference type="InterPro" id="IPR038372">
    <property type="entry name" value="PA/PA-X_sf"/>
</dbReference>
<dbReference type="Pfam" id="PF00603">
    <property type="entry name" value="Flu_PA"/>
    <property type="match status" value="1"/>
</dbReference>
<keyword id="KW-1132">Decay of host mRNAs by virus</keyword>
<keyword id="KW-1262">Eukaryotic host gene expression shutoff by virus</keyword>
<keyword id="KW-1035">Host cytoplasm</keyword>
<keyword id="KW-1190">Host gene expression shutoff by virus</keyword>
<keyword id="KW-1192">Host mRNA suppression by virus</keyword>
<keyword id="KW-1048">Host nucleus</keyword>
<keyword id="KW-0945">Host-virus interaction</keyword>
<keyword id="KW-0688">Ribosomal frameshifting</keyword>
<reference key="1">
    <citation type="journal article" date="1992" name="Virology">
        <title>Sequence changes in the live attenuated, cold-adapted variants of influenza A/Leningrad/134/57 (H2N2) virus.</title>
        <authorList>
            <person name="Klimov A.I."/>
            <person name="Cox N.J."/>
            <person name="Yotov W.V."/>
            <person name="Rocha E."/>
            <person name="Alexandrova G.I."/>
            <person name="Kendal A.P."/>
        </authorList>
    </citation>
    <scope>NUCLEOTIDE SEQUENCE [MRNA]</scope>
</reference>
<organismHost>
    <name type="scientific">Aves</name>
    <dbReference type="NCBI Taxonomy" id="8782"/>
</organismHost>
<organismHost>
    <name type="scientific">Homo sapiens</name>
    <name type="common">Human</name>
    <dbReference type="NCBI Taxonomy" id="9606"/>
</organismHost>
<feature type="chain" id="PRO_0000419387" description="Protein PA-X">
    <location>
        <begin position="1"/>
        <end position="252"/>
    </location>
</feature>
<feature type="active site" evidence="2">
    <location>
        <position position="80"/>
    </location>
</feature>
<feature type="active site" evidence="2">
    <location>
        <position position="108"/>
    </location>
</feature>
<feature type="site" description="Important for efficient shutoff activity and nuclear localization" evidence="4">
    <location>
        <position position="195"/>
    </location>
</feature>
<feature type="site" description="Important for efficient shutoff activity and nuclear localization" evidence="4">
    <location>
        <position position="198"/>
    </location>
</feature>
<feature type="site" description="Important for efficient shutoff activity and nuclear localization" evidence="4">
    <location>
        <position position="199"/>
    </location>
</feature>
<feature type="site" description="Important for efficient shutoff activity" evidence="3">
    <location>
        <position position="202"/>
    </location>
</feature>
<feature type="site" description="Important for efficient shutoff activity" evidence="3">
    <location>
        <position position="203"/>
    </location>
</feature>
<feature type="site" description="Important for efficient shutoff activity" evidence="3">
    <location>
        <position position="206"/>
    </location>
</feature>
<accession>P0DJS4</accession>
<name>PAX_I57A2</name>
<sequence length="252" mass="29337">MEEFVRQCFNPMIVELAEKAMKEYGEDRKIETNKFAAICTHLEVCFMYSDFHFINEQGESIIVELDDPNALLKHRFEIIEGRDRTMAWTVVNSICNTTGAEKPKFLPDLYDYKENRFIEIGVTRREVHIYYLEKANKIKSEKTHIHIFSFTGEEMATKADYTLDEESRARIKTRLFTIRQEMASRGLWDSFVSPKEAKKQLKKDLKSQGQCAGSPTKVSRRTSPALRILEPMWMDSNPTATLRASFLKCPKK</sequence>
<protein>
    <recommendedName>
        <fullName>Protein PA-X</fullName>
    </recommendedName>
</protein>